<dbReference type="EC" id="1.8.1.9" evidence="2"/>
<dbReference type="EMBL" id="AE014297">
    <property type="protein sequence ID" value="AAF54565.1"/>
    <property type="molecule type" value="Genomic_DNA"/>
</dbReference>
<dbReference type="EMBL" id="AE014297">
    <property type="protein sequence ID" value="ACZ94882.1"/>
    <property type="molecule type" value="Genomic_DNA"/>
</dbReference>
<dbReference type="EMBL" id="AY060862">
    <property type="protein sequence ID" value="AAL28410.1"/>
    <property type="molecule type" value="mRNA"/>
</dbReference>
<dbReference type="EMBL" id="AY071254">
    <property type="protein sequence ID" value="AAL48876.1"/>
    <property type="molecule type" value="mRNA"/>
</dbReference>
<dbReference type="RefSeq" id="NP_001163585.1">
    <property type="nucleotide sequence ID" value="NM_001170114.1"/>
</dbReference>
<dbReference type="RefSeq" id="NP_650026.1">
    <property type="nucleotide sequence ID" value="NM_141769.4"/>
</dbReference>
<dbReference type="SMR" id="Q9VGV8"/>
<dbReference type="FunCoup" id="Q9VGV8">
    <property type="interactions" value="2373"/>
</dbReference>
<dbReference type="IntAct" id="Q9VGV8">
    <property type="interactions" value="4"/>
</dbReference>
<dbReference type="STRING" id="7227.FBpp0081763"/>
<dbReference type="PaxDb" id="7227-FBpp0081763"/>
<dbReference type="DNASU" id="41305"/>
<dbReference type="EnsemblMetazoa" id="FBtr0082286">
    <property type="protein sequence ID" value="FBpp0081763"/>
    <property type="gene ID" value="FBgn0037843"/>
</dbReference>
<dbReference type="EnsemblMetazoa" id="FBtr0302202">
    <property type="protein sequence ID" value="FBpp0291412"/>
    <property type="gene ID" value="FBgn0037843"/>
</dbReference>
<dbReference type="GeneID" id="41305"/>
<dbReference type="KEGG" id="dme:Dmel_CG4511"/>
<dbReference type="UCSC" id="CG4511-RA">
    <property type="organism name" value="d. melanogaster"/>
</dbReference>
<dbReference type="AGR" id="FB:FBgn0037843"/>
<dbReference type="FlyBase" id="FBgn0037843">
    <property type="gene designation" value="PhLP3"/>
</dbReference>
<dbReference type="VEuPathDB" id="VectorBase:FBgn0037843"/>
<dbReference type="eggNOG" id="KOG1672">
    <property type="taxonomic scope" value="Eukaryota"/>
</dbReference>
<dbReference type="GeneTree" id="ENSGT00390000015645"/>
<dbReference type="HOGENOM" id="CLU_072378_2_0_1"/>
<dbReference type="OMA" id="CVIAFID"/>
<dbReference type="OrthoDB" id="10257948at2759"/>
<dbReference type="BioGRID-ORCS" id="41305">
    <property type="hits" value="0 hits in 1 CRISPR screen"/>
</dbReference>
<dbReference type="Proteomes" id="UP000000803">
    <property type="component" value="Chromosome 3R"/>
</dbReference>
<dbReference type="Bgee" id="FBgn0037843">
    <property type="expression patterns" value="Expressed in imaginal disc and 145 other cell types or tissues"/>
</dbReference>
<dbReference type="GO" id="GO:0005737">
    <property type="term" value="C:cytoplasm"/>
    <property type="evidence" value="ECO:0000318"/>
    <property type="project" value="GO_Central"/>
</dbReference>
<dbReference type="GO" id="GO:0005829">
    <property type="term" value="C:cytosol"/>
    <property type="evidence" value="ECO:0000303"/>
    <property type="project" value="FlyBase"/>
</dbReference>
<dbReference type="GO" id="GO:0044183">
    <property type="term" value="F:protein folding chaperone"/>
    <property type="evidence" value="ECO:0000303"/>
    <property type="project" value="FlyBase"/>
</dbReference>
<dbReference type="GO" id="GO:0061077">
    <property type="term" value="P:chaperone-mediated protein folding"/>
    <property type="evidence" value="ECO:0000303"/>
    <property type="project" value="FlyBase"/>
</dbReference>
<dbReference type="GO" id="GO:0000226">
    <property type="term" value="P:microtubule cytoskeleton organization"/>
    <property type="evidence" value="ECO:0000318"/>
    <property type="project" value="GO_Central"/>
</dbReference>
<dbReference type="CDD" id="cd02989">
    <property type="entry name" value="Phd_like_TxnDC9"/>
    <property type="match status" value="1"/>
</dbReference>
<dbReference type="Gene3D" id="3.40.30.10">
    <property type="entry name" value="Glutaredoxin"/>
    <property type="match status" value="1"/>
</dbReference>
<dbReference type="InterPro" id="IPR024253">
    <property type="entry name" value="Phosducin_thioredoxin-like_dom"/>
</dbReference>
<dbReference type="InterPro" id="IPR036249">
    <property type="entry name" value="Thioredoxin-like_sf"/>
</dbReference>
<dbReference type="PANTHER" id="PTHR21148">
    <property type="entry name" value="THIOREDOXIN DOMAIN-CONTAINING PROTEIN 9"/>
    <property type="match status" value="1"/>
</dbReference>
<dbReference type="Pfam" id="PF02114">
    <property type="entry name" value="Phosducin"/>
    <property type="match status" value="1"/>
</dbReference>
<dbReference type="SUPFAM" id="SSF52833">
    <property type="entry name" value="Thioredoxin-like"/>
    <property type="match status" value="1"/>
</dbReference>
<feature type="chain" id="PRO_0000462323" description="Phosducin-like protein 3">
    <location>
        <begin position="1"/>
        <end position="216"/>
    </location>
</feature>
<feature type="domain" description="Phosducin" evidence="1">
    <location>
        <begin position="29"/>
        <end position="163"/>
    </location>
</feature>
<feature type="coiled-coil region" evidence="1">
    <location>
        <begin position="13"/>
        <end position="59"/>
    </location>
</feature>
<sequence length="216" mass="25110">MANILENQLFTAAKTIEQQLDQQLDRLDNLDSDDLKVLREQRLREMKDLNNKKQEWLRNGHGTYTELADEKEFFEMSKKSPNIVCHFYRDSTERCKIVDMHLKILAAKHVEAKFCKVNAEKTPFLTQRLRIKVIPTIALVKDSKTKDFIVGFTDLGNCDDFATEMLEWRIAHSGAIDYKGDLMQPPDVKRKPFINRPQKTIRGGYDSDDSDIDLDD</sequence>
<protein>
    <recommendedName>
        <fullName evidence="6">Phosducin-like protein 3</fullName>
        <ecNumber evidence="2">1.8.1.9</ecNumber>
    </recommendedName>
</protein>
<proteinExistence type="evidence at protein level"/>
<keyword id="KW-0175">Coiled coil</keyword>
<keyword id="KW-0221">Differentiation</keyword>
<keyword id="KW-0560">Oxidoreductase</keyword>
<keyword id="KW-1185">Reference proteome</keyword>
<keyword id="KW-0744">Spermatogenesis</keyword>
<organism evidence="7">
    <name type="scientific">Drosophila melanogaster</name>
    <name type="common">Fruit fly</name>
    <dbReference type="NCBI Taxonomy" id="7227"/>
    <lineage>
        <taxon>Eukaryota</taxon>
        <taxon>Metazoa</taxon>
        <taxon>Ecdysozoa</taxon>
        <taxon>Arthropoda</taxon>
        <taxon>Hexapoda</taxon>
        <taxon>Insecta</taxon>
        <taxon>Pterygota</taxon>
        <taxon>Neoptera</taxon>
        <taxon>Endopterygota</taxon>
        <taxon>Diptera</taxon>
        <taxon>Brachycera</taxon>
        <taxon>Muscomorpha</taxon>
        <taxon>Ephydroidea</taxon>
        <taxon>Drosophilidae</taxon>
        <taxon>Drosophila</taxon>
        <taxon>Sophophora</taxon>
    </lineage>
</organism>
<evidence type="ECO:0000255" key="1"/>
<evidence type="ECO:0000269" key="2">
    <source>
    </source>
</evidence>
<evidence type="ECO:0000305" key="3"/>
<evidence type="ECO:0000312" key="4">
    <source>
        <dbReference type="EMBL" id="AAL28410.1"/>
    </source>
</evidence>
<evidence type="ECO:0000312" key="5">
    <source>
        <dbReference type="EMBL" id="AAL48876.1"/>
    </source>
</evidence>
<evidence type="ECO:0000312" key="6">
    <source>
        <dbReference type="FlyBase" id="FBgn0037843"/>
    </source>
</evidence>
<evidence type="ECO:0000312" key="7">
    <source>
        <dbReference type="Proteomes" id="UP000000803"/>
    </source>
</evidence>
<comment type="function">
    <text evidence="2">Has redox activity with thioredoxin (PubMed:39480878). Required for male fertility and maturation of sperm past the canoe stage during spermiogenesis (PubMed:39480878).</text>
</comment>
<comment type="catalytic activity">
    <reaction evidence="2">
        <text>[thioredoxin]-dithiol + NADP(+) = [thioredoxin]-disulfide + NADPH + H(+)</text>
        <dbReference type="Rhea" id="RHEA:20345"/>
        <dbReference type="Rhea" id="RHEA-COMP:10698"/>
        <dbReference type="Rhea" id="RHEA-COMP:10700"/>
        <dbReference type="ChEBI" id="CHEBI:15378"/>
        <dbReference type="ChEBI" id="CHEBI:29950"/>
        <dbReference type="ChEBI" id="CHEBI:50058"/>
        <dbReference type="ChEBI" id="CHEBI:57783"/>
        <dbReference type="ChEBI" id="CHEBI:58349"/>
        <dbReference type="EC" id="1.8.1.9"/>
    </reaction>
</comment>
<comment type="biophysicochemical properties">
    <kinetics>
        <KM evidence="2">2.72 uM for dhd/Thioredoxin-1</KM>
        <Vmax evidence="2">5.4 uM/min/mg enzyme</Vmax>
    </kinetics>
</comment>
<comment type="tissue specificity">
    <text evidence="2">Highly expressed in germline cells of the testis from the spermatogonia stage until the early spermatid stage but is no longer observed in late-stage spermatids in the distal end of the testis.</text>
</comment>
<comment type="disruption phenotype">
    <text evidence="2">Viable, but males are sterile with seminal vesicles of reduced size and lacking mature sperm (PubMed:39480878). Sperm fail to mature past the canoe stage (PubMed:39480878). RNAi-mediated knockdown in male germ cells results in disrupted spermiogenesis (PubMed:39480878).</text>
</comment>
<comment type="similarity">
    <text evidence="1">Belongs to the phosducin family.</text>
</comment>
<reference evidence="7" key="1">
    <citation type="journal article" date="2000" name="Science">
        <title>The genome sequence of Drosophila melanogaster.</title>
        <authorList>
            <person name="Adams M.D."/>
            <person name="Celniker S.E."/>
            <person name="Holt R.A."/>
            <person name="Evans C.A."/>
            <person name="Gocayne J.D."/>
            <person name="Amanatides P.G."/>
            <person name="Scherer S.E."/>
            <person name="Li P.W."/>
            <person name="Hoskins R.A."/>
            <person name="Galle R.F."/>
            <person name="George R.A."/>
            <person name="Lewis S.E."/>
            <person name="Richards S."/>
            <person name="Ashburner M."/>
            <person name="Henderson S.N."/>
            <person name="Sutton G.G."/>
            <person name="Wortman J.R."/>
            <person name="Yandell M.D."/>
            <person name="Zhang Q."/>
            <person name="Chen L.X."/>
            <person name="Brandon R.C."/>
            <person name="Rogers Y.-H.C."/>
            <person name="Blazej R.G."/>
            <person name="Champe M."/>
            <person name="Pfeiffer B.D."/>
            <person name="Wan K.H."/>
            <person name="Doyle C."/>
            <person name="Baxter E.G."/>
            <person name="Helt G."/>
            <person name="Nelson C.R."/>
            <person name="Miklos G.L.G."/>
            <person name="Abril J.F."/>
            <person name="Agbayani A."/>
            <person name="An H.-J."/>
            <person name="Andrews-Pfannkoch C."/>
            <person name="Baldwin D."/>
            <person name="Ballew R.M."/>
            <person name="Basu A."/>
            <person name="Baxendale J."/>
            <person name="Bayraktaroglu L."/>
            <person name="Beasley E.M."/>
            <person name="Beeson K.Y."/>
            <person name="Benos P.V."/>
            <person name="Berman B.P."/>
            <person name="Bhandari D."/>
            <person name="Bolshakov S."/>
            <person name="Borkova D."/>
            <person name="Botchan M.R."/>
            <person name="Bouck J."/>
            <person name="Brokstein P."/>
            <person name="Brottier P."/>
            <person name="Burtis K.C."/>
            <person name="Busam D.A."/>
            <person name="Butler H."/>
            <person name="Cadieu E."/>
            <person name="Center A."/>
            <person name="Chandra I."/>
            <person name="Cherry J.M."/>
            <person name="Cawley S."/>
            <person name="Dahlke C."/>
            <person name="Davenport L.B."/>
            <person name="Davies P."/>
            <person name="de Pablos B."/>
            <person name="Delcher A."/>
            <person name="Deng Z."/>
            <person name="Mays A.D."/>
            <person name="Dew I."/>
            <person name="Dietz S.M."/>
            <person name="Dodson K."/>
            <person name="Doup L.E."/>
            <person name="Downes M."/>
            <person name="Dugan-Rocha S."/>
            <person name="Dunkov B.C."/>
            <person name="Dunn P."/>
            <person name="Durbin K.J."/>
            <person name="Evangelista C.C."/>
            <person name="Ferraz C."/>
            <person name="Ferriera S."/>
            <person name="Fleischmann W."/>
            <person name="Fosler C."/>
            <person name="Gabrielian A.E."/>
            <person name="Garg N.S."/>
            <person name="Gelbart W.M."/>
            <person name="Glasser K."/>
            <person name="Glodek A."/>
            <person name="Gong F."/>
            <person name="Gorrell J.H."/>
            <person name="Gu Z."/>
            <person name="Guan P."/>
            <person name="Harris M."/>
            <person name="Harris N.L."/>
            <person name="Harvey D.A."/>
            <person name="Heiman T.J."/>
            <person name="Hernandez J.R."/>
            <person name="Houck J."/>
            <person name="Hostin D."/>
            <person name="Houston K.A."/>
            <person name="Howland T.J."/>
            <person name="Wei M.-H."/>
            <person name="Ibegwam C."/>
            <person name="Jalali M."/>
            <person name="Kalush F."/>
            <person name="Karpen G.H."/>
            <person name="Ke Z."/>
            <person name="Kennison J.A."/>
            <person name="Ketchum K.A."/>
            <person name="Kimmel B.E."/>
            <person name="Kodira C.D."/>
            <person name="Kraft C.L."/>
            <person name="Kravitz S."/>
            <person name="Kulp D."/>
            <person name="Lai Z."/>
            <person name="Lasko P."/>
            <person name="Lei Y."/>
            <person name="Levitsky A.A."/>
            <person name="Li J.H."/>
            <person name="Li Z."/>
            <person name="Liang Y."/>
            <person name="Lin X."/>
            <person name="Liu X."/>
            <person name="Mattei B."/>
            <person name="McIntosh T.C."/>
            <person name="McLeod M.P."/>
            <person name="McPherson D."/>
            <person name="Merkulov G."/>
            <person name="Milshina N.V."/>
            <person name="Mobarry C."/>
            <person name="Morris J."/>
            <person name="Moshrefi A."/>
            <person name="Mount S.M."/>
            <person name="Moy M."/>
            <person name="Murphy B."/>
            <person name="Murphy L."/>
            <person name="Muzny D.M."/>
            <person name="Nelson D.L."/>
            <person name="Nelson D.R."/>
            <person name="Nelson K.A."/>
            <person name="Nixon K."/>
            <person name="Nusskern D.R."/>
            <person name="Pacleb J.M."/>
            <person name="Palazzolo M."/>
            <person name="Pittman G.S."/>
            <person name="Pan S."/>
            <person name="Pollard J."/>
            <person name="Puri V."/>
            <person name="Reese M.G."/>
            <person name="Reinert K."/>
            <person name="Remington K."/>
            <person name="Saunders R.D.C."/>
            <person name="Scheeler F."/>
            <person name="Shen H."/>
            <person name="Shue B.C."/>
            <person name="Siden-Kiamos I."/>
            <person name="Simpson M."/>
            <person name="Skupski M.P."/>
            <person name="Smith T.J."/>
            <person name="Spier E."/>
            <person name="Spradling A.C."/>
            <person name="Stapleton M."/>
            <person name="Strong R."/>
            <person name="Sun E."/>
            <person name="Svirskas R."/>
            <person name="Tector C."/>
            <person name="Turner R."/>
            <person name="Venter E."/>
            <person name="Wang A.H."/>
            <person name="Wang X."/>
            <person name="Wang Z.-Y."/>
            <person name="Wassarman D.A."/>
            <person name="Weinstock G.M."/>
            <person name="Weissenbach J."/>
            <person name="Williams S.M."/>
            <person name="Woodage T."/>
            <person name="Worley K.C."/>
            <person name="Wu D."/>
            <person name="Yang S."/>
            <person name="Yao Q.A."/>
            <person name="Ye J."/>
            <person name="Yeh R.-F."/>
            <person name="Zaveri J.S."/>
            <person name="Zhan M."/>
            <person name="Zhang G."/>
            <person name="Zhao Q."/>
            <person name="Zheng L."/>
            <person name="Zheng X.H."/>
            <person name="Zhong F.N."/>
            <person name="Zhong W."/>
            <person name="Zhou X."/>
            <person name="Zhu S.C."/>
            <person name="Zhu X."/>
            <person name="Smith H.O."/>
            <person name="Gibbs R.A."/>
            <person name="Myers E.W."/>
            <person name="Rubin G.M."/>
            <person name="Venter J.C."/>
        </authorList>
    </citation>
    <scope>NUCLEOTIDE SEQUENCE [LARGE SCALE GENOMIC DNA]</scope>
    <source>
        <strain evidence="7">Berkeley</strain>
    </source>
</reference>
<reference evidence="7" key="2">
    <citation type="journal article" date="2002" name="Genome Biol.">
        <title>Annotation of the Drosophila melanogaster euchromatic genome: a systematic review.</title>
        <authorList>
            <person name="Misra S."/>
            <person name="Crosby M.A."/>
            <person name="Mungall C.J."/>
            <person name="Matthews B.B."/>
            <person name="Campbell K.S."/>
            <person name="Hradecky P."/>
            <person name="Huang Y."/>
            <person name="Kaminker J.S."/>
            <person name="Millburn G.H."/>
            <person name="Prochnik S.E."/>
            <person name="Smith C.D."/>
            <person name="Tupy J.L."/>
            <person name="Whitfield E.J."/>
            <person name="Bayraktaroglu L."/>
            <person name="Berman B.P."/>
            <person name="Bettencourt B.R."/>
            <person name="Celniker S.E."/>
            <person name="de Grey A.D.N.J."/>
            <person name="Drysdale R.A."/>
            <person name="Harris N.L."/>
            <person name="Richter J."/>
            <person name="Russo S."/>
            <person name="Schroeder A.J."/>
            <person name="Shu S.Q."/>
            <person name="Stapleton M."/>
            <person name="Yamada C."/>
            <person name="Ashburner M."/>
            <person name="Gelbart W.M."/>
            <person name="Rubin G.M."/>
            <person name="Lewis S.E."/>
        </authorList>
    </citation>
    <scope>GENOME REANNOTATION</scope>
    <source>
        <strain evidence="7">Berkeley</strain>
    </source>
</reference>
<reference evidence="4 5" key="3">
    <citation type="journal article" date="2002" name="Genome Biol.">
        <title>A Drosophila full-length cDNA resource.</title>
        <authorList>
            <person name="Stapleton M."/>
            <person name="Carlson J.W."/>
            <person name="Brokstein P."/>
            <person name="Yu C."/>
            <person name="Champe M."/>
            <person name="George R.A."/>
            <person name="Guarin H."/>
            <person name="Kronmiller B."/>
            <person name="Pacleb J.M."/>
            <person name="Park S."/>
            <person name="Wan K.H."/>
            <person name="Rubin G.M."/>
            <person name="Celniker S.E."/>
        </authorList>
    </citation>
    <scope>NUCLEOTIDE SEQUENCE [LARGE SCALE MRNA]</scope>
    <source>
        <strain evidence="4 5">Berkeley</strain>
        <tissue evidence="5">Embryo</tissue>
        <tissue evidence="4">Ovary</tissue>
    </source>
</reference>
<reference evidence="3" key="4">
    <citation type="journal article" date="2024" name="PLoS ONE">
        <title>The evolutionarily conserved PhLP3 is essential for sperm development in Drosophila melanogaster.</title>
        <authorList>
            <person name="Petit C."/>
            <person name="Kojak E."/>
            <person name="Webster S."/>
            <person name="Marra M."/>
            <person name="Sweeney B."/>
            <person name="Chaikin C."/>
            <person name="Jemc J.C."/>
            <person name="Kanzok S.M."/>
        </authorList>
    </citation>
    <scope>FUNCTION</scope>
    <scope>CATALYTIC ACTIVITY</scope>
    <scope>BIOPHYSICOCHEMICAL PROPERTIES</scope>
    <scope>TISSUE SPECIFICITY</scope>
    <scope>DISRUPTION PHENOTYPE</scope>
</reference>
<accession>Q9VGV8</accession>
<name>PHLP3_DROME</name>
<gene>
    <name evidence="6" type="primary">PhLP3</name>
    <name evidence="6" type="ORF">CG4511</name>
</gene>